<keyword id="KW-0067">ATP-binding</keyword>
<keyword id="KW-0319">Glycerol metabolism</keyword>
<keyword id="KW-0418">Kinase</keyword>
<keyword id="KW-0547">Nucleotide-binding</keyword>
<keyword id="KW-0808">Transferase</keyword>
<protein>
    <recommendedName>
        <fullName evidence="1">Glycerol kinase</fullName>
        <ecNumber evidence="1">2.7.1.30</ecNumber>
    </recommendedName>
    <alternativeName>
        <fullName evidence="1">ATP:glycerol 3-phosphotransferase</fullName>
    </alternativeName>
    <alternativeName>
        <fullName evidence="1">Glycerokinase</fullName>
        <shortName evidence="1">GK</shortName>
    </alternativeName>
</protein>
<comment type="function">
    <text evidence="1">Key enzyme in the regulation of glycerol uptake and metabolism. Catalyzes the phosphorylation of glycerol to yield sn-glycerol 3-phosphate.</text>
</comment>
<comment type="catalytic activity">
    <reaction evidence="1">
        <text>glycerol + ATP = sn-glycerol 3-phosphate + ADP + H(+)</text>
        <dbReference type="Rhea" id="RHEA:21644"/>
        <dbReference type="ChEBI" id="CHEBI:15378"/>
        <dbReference type="ChEBI" id="CHEBI:17754"/>
        <dbReference type="ChEBI" id="CHEBI:30616"/>
        <dbReference type="ChEBI" id="CHEBI:57597"/>
        <dbReference type="ChEBI" id="CHEBI:456216"/>
        <dbReference type="EC" id="2.7.1.30"/>
    </reaction>
</comment>
<comment type="activity regulation">
    <text evidence="1">Inhibited by fructose 1,6-bisphosphate (FBP).</text>
</comment>
<comment type="pathway">
    <text evidence="1">Polyol metabolism; glycerol degradation via glycerol kinase pathway; sn-glycerol 3-phosphate from glycerol: step 1/1.</text>
</comment>
<comment type="similarity">
    <text evidence="1">Belongs to the FGGY kinase family.</text>
</comment>
<dbReference type="EC" id="2.7.1.30" evidence="1"/>
<dbReference type="EMBL" id="CP000958">
    <property type="protein sequence ID" value="ACA91867.1"/>
    <property type="molecule type" value="Genomic_DNA"/>
</dbReference>
<dbReference type="RefSeq" id="WP_011546147.1">
    <property type="nucleotide sequence ID" value="NC_010508.1"/>
</dbReference>
<dbReference type="SMR" id="B1JY43"/>
<dbReference type="GeneID" id="83049492"/>
<dbReference type="KEGG" id="bcm:Bcenmc03_2707"/>
<dbReference type="HOGENOM" id="CLU_009281_2_3_4"/>
<dbReference type="UniPathway" id="UPA00618">
    <property type="reaction ID" value="UER00672"/>
</dbReference>
<dbReference type="Proteomes" id="UP000002169">
    <property type="component" value="Chromosome 1"/>
</dbReference>
<dbReference type="GO" id="GO:0005829">
    <property type="term" value="C:cytosol"/>
    <property type="evidence" value="ECO:0007669"/>
    <property type="project" value="TreeGrafter"/>
</dbReference>
<dbReference type="GO" id="GO:0005524">
    <property type="term" value="F:ATP binding"/>
    <property type="evidence" value="ECO:0007669"/>
    <property type="project" value="UniProtKB-UniRule"/>
</dbReference>
<dbReference type="GO" id="GO:0004370">
    <property type="term" value="F:glycerol kinase activity"/>
    <property type="evidence" value="ECO:0000250"/>
    <property type="project" value="UniProtKB"/>
</dbReference>
<dbReference type="GO" id="GO:0019563">
    <property type="term" value="P:glycerol catabolic process"/>
    <property type="evidence" value="ECO:0007669"/>
    <property type="project" value="UniProtKB-UniRule"/>
</dbReference>
<dbReference type="GO" id="GO:0006071">
    <property type="term" value="P:glycerol metabolic process"/>
    <property type="evidence" value="ECO:0000250"/>
    <property type="project" value="UniProtKB"/>
</dbReference>
<dbReference type="GO" id="GO:0006072">
    <property type="term" value="P:glycerol-3-phosphate metabolic process"/>
    <property type="evidence" value="ECO:0007669"/>
    <property type="project" value="InterPro"/>
</dbReference>
<dbReference type="CDD" id="cd07786">
    <property type="entry name" value="FGGY_EcGK_like"/>
    <property type="match status" value="1"/>
</dbReference>
<dbReference type="FunFam" id="3.30.420.40:FF:000007">
    <property type="entry name" value="Glycerol kinase"/>
    <property type="match status" value="1"/>
</dbReference>
<dbReference type="FunFam" id="3.30.420.40:FF:000008">
    <property type="entry name" value="Glycerol kinase"/>
    <property type="match status" value="1"/>
</dbReference>
<dbReference type="Gene3D" id="3.30.420.40">
    <property type="match status" value="2"/>
</dbReference>
<dbReference type="HAMAP" id="MF_00186">
    <property type="entry name" value="Glycerol_kin"/>
    <property type="match status" value="1"/>
</dbReference>
<dbReference type="InterPro" id="IPR043129">
    <property type="entry name" value="ATPase_NBD"/>
</dbReference>
<dbReference type="InterPro" id="IPR000577">
    <property type="entry name" value="Carb_kinase_FGGY"/>
</dbReference>
<dbReference type="InterPro" id="IPR018483">
    <property type="entry name" value="Carb_kinase_FGGY_CS"/>
</dbReference>
<dbReference type="InterPro" id="IPR018485">
    <property type="entry name" value="FGGY_C"/>
</dbReference>
<dbReference type="InterPro" id="IPR018484">
    <property type="entry name" value="FGGY_N"/>
</dbReference>
<dbReference type="InterPro" id="IPR005999">
    <property type="entry name" value="Glycerol_kin"/>
</dbReference>
<dbReference type="NCBIfam" id="TIGR01311">
    <property type="entry name" value="glycerol_kin"/>
    <property type="match status" value="1"/>
</dbReference>
<dbReference type="NCBIfam" id="NF000756">
    <property type="entry name" value="PRK00047.1"/>
    <property type="match status" value="1"/>
</dbReference>
<dbReference type="PANTHER" id="PTHR10196:SF69">
    <property type="entry name" value="GLYCEROL KINASE"/>
    <property type="match status" value="1"/>
</dbReference>
<dbReference type="PANTHER" id="PTHR10196">
    <property type="entry name" value="SUGAR KINASE"/>
    <property type="match status" value="1"/>
</dbReference>
<dbReference type="Pfam" id="PF02782">
    <property type="entry name" value="FGGY_C"/>
    <property type="match status" value="1"/>
</dbReference>
<dbReference type="Pfam" id="PF00370">
    <property type="entry name" value="FGGY_N"/>
    <property type="match status" value="1"/>
</dbReference>
<dbReference type="PIRSF" id="PIRSF000538">
    <property type="entry name" value="GlpK"/>
    <property type="match status" value="1"/>
</dbReference>
<dbReference type="SUPFAM" id="SSF53067">
    <property type="entry name" value="Actin-like ATPase domain"/>
    <property type="match status" value="2"/>
</dbReference>
<dbReference type="PROSITE" id="PS00933">
    <property type="entry name" value="FGGY_KINASES_1"/>
    <property type="match status" value="1"/>
</dbReference>
<dbReference type="PROSITE" id="PS00445">
    <property type="entry name" value="FGGY_KINASES_2"/>
    <property type="match status" value="1"/>
</dbReference>
<accession>B1JY43</accession>
<proteinExistence type="inferred from homology"/>
<name>GLPK_BURO0</name>
<reference key="1">
    <citation type="submission" date="2008-02" db="EMBL/GenBank/DDBJ databases">
        <title>Complete sequence of chromosome 1 of Burkholderia cenocepacia MC0-3.</title>
        <authorList>
            <person name="Copeland A."/>
            <person name="Lucas S."/>
            <person name="Lapidus A."/>
            <person name="Barry K."/>
            <person name="Bruce D."/>
            <person name="Goodwin L."/>
            <person name="Glavina del Rio T."/>
            <person name="Dalin E."/>
            <person name="Tice H."/>
            <person name="Pitluck S."/>
            <person name="Chain P."/>
            <person name="Malfatti S."/>
            <person name="Shin M."/>
            <person name="Vergez L."/>
            <person name="Schmutz J."/>
            <person name="Larimer F."/>
            <person name="Land M."/>
            <person name="Hauser L."/>
            <person name="Kyrpides N."/>
            <person name="Mikhailova N."/>
            <person name="Tiedje J."/>
            <person name="Richardson P."/>
        </authorList>
    </citation>
    <scope>NUCLEOTIDE SEQUENCE [LARGE SCALE GENOMIC DNA]</scope>
    <source>
        <strain>MC0-3</strain>
    </source>
</reference>
<organism>
    <name type="scientific">Burkholderia orbicola (strain MC0-3)</name>
    <dbReference type="NCBI Taxonomy" id="406425"/>
    <lineage>
        <taxon>Bacteria</taxon>
        <taxon>Pseudomonadati</taxon>
        <taxon>Pseudomonadota</taxon>
        <taxon>Betaproteobacteria</taxon>
        <taxon>Burkholderiales</taxon>
        <taxon>Burkholderiaceae</taxon>
        <taxon>Burkholderia</taxon>
        <taxon>Burkholderia cepacia complex</taxon>
        <taxon>Burkholderia orbicola</taxon>
    </lineage>
</organism>
<feature type="chain" id="PRO_1000098720" description="Glycerol kinase">
    <location>
        <begin position="1"/>
        <end position="500"/>
    </location>
</feature>
<feature type="binding site" evidence="1">
    <location>
        <position position="13"/>
    </location>
    <ligand>
        <name>ADP</name>
        <dbReference type="ChEBI" id="CHEBI:456216"/>
    </ligand>
</feature>
<feature type="binding site" evidence="1">
    <location>
        <position position="13"/>
    </location>
    <ligand>
        <name>ATP</name>
        <dbReference type="ChEBI" id="CHEBI:30616"/>
    </ligand>
</feature>
<feature type="binding site" evidence="1">
    <location>
        <position position="13"/>
    </location>
    <ligand>
        <name>sn-glycerol 3-phosphate</name>
        <dbReference type="ChEBI" id="CHEBI:57597"/>
    </ligand>
</feature>
<feature type="binding site" evidence="1">
    <location>
        <position position="14"/>
    </location>
    <ligand>
        <name>ATP</name>
        <dbReference type="ChEBI" id="CHEBI:30616"/>
    </ligand>
</feature>
<feature type="binding site" evidence="1">
    <location>
        <position position="15"/>
    </location>
    <ligand>
        <name>ATP</name>
        <dbReference type="ChEBI" id="CHEBI:30616"/>
    </ligand>
</feature>
<feature type="binding site" evidence="1">
    <location>
        <position position="17"/>
    </location>
    <ligand>
        <name>ADP</name>
        <dbReference type="ChEBI" id="CHEBI:456216"/>
    </ligand>
</feature>
<feature type="binding site" evidence="1">
    <location>
        <position position="83"/>
    </location>
    <ligand>
        <name>glycerol</name>
        <dbReference type="ChEBI" id="CHEBI:17754"/>
    </ligand>
</feature>
<feature type="binding site" evidence="1">
    <location>
        <position position="83"/>
    </location>
    <ligand>
        <name>sn-glycerol 3-phosphate</name>
        <dbReference type="ChEBI" id="CHEBI:57597"/>
    </ligand>
</feature>
<feature type="binding site" evidence="1">
    <location>
        <position position="84"/>
    </location>
    <ligand>
        <name>glycerol</name>
        <dbReference type="ChEBI" id="CHEBI:17754"/>
    </ligand>
</feature>
<feature type="binding site" evidence="1">
    <location>
        <position position="84"/>
    </location>
    <ligand>
        <name>sn-glycerol 3-phosphate</name>
        <dbReference type="ChEBI" id="CHEBI:57597"/>
    </ligand>
</feature>
<feature type="binding site" evidence="1">
    <location>
        <position position="135"/>
    </location>
    <ligand>
        <name>glycerol</name>
        <dbReference type="ChEBI" id="CHEBI:17754"/>
    </ligand>
</feature>
<feature type="binding site" evidence="1">
    <location>
        <position position="135"/>
    </location>
    <ligand>
        <name>sn-glycerol 3-phosphate</name>
        <dbReference type="ChEBI" id="CHEBI:57597"/>
    </ligand>
</feature>
<feature type="binding site" evidence="1">
    <location>
        <position position="244"/>
    </location>
    <ligand>
        <name>glycerol</name>
        <dbReference type="ChEBI" id="CHEBI:17754"/>
    </ligand>
</feature>
<feature type="binding site" evidence="1">
    <location>
        <position position="244"/>
    </location>
    <ligand>
        <name>sn-glycerol 3-phosphate</name>
        <dbReference type="ChEBI" id="CHEBI:57597"/>
    </ligand>
</feature>
<feature type="binding site" evidence="1">
    <location>
        <position position="245"/>
    </location>
    <ligand>
        <name>glycerol</name>
        <dbReference type="ChEBI" id="CHEBI:17754"/>
    </ligand>
</feature>
<feature type="binding site" evidence="1">
    <location>
        <position position="266"/>
    </location>
    <ligand>
        <name>ADP</name>
        <dbReference type="ChEBI" id="CHEBI:456216"/>
    </ligand>
</feature>
<feature type="binding site" evidence="1">
    <location>
        <position position="266"/>
    </location>
    <ligand>
        <name>ATP</name>
        <dbReference type="ChEBI" id="CHEBI:30616"/>
    </ligand>
</feature>
<feature type="binding site" evidence="1">
    <location>
        <position position="309"/>
    </location>
    <ligand>
        <name>ADP</name>
        <dbReference type="ChEBI" id="CHEBI:456216"/>
    </ligand>
</feature>
<feature type="binding site" evidence="1">
    <location>
        <position position="309"/>
    </location>
    <ligand>
        <name>ATP</name>
        <dbReference type="ChEBI" id="CHEBI:30616"/>
    </ligand>
</feature>
<feature type="binding site" evidence="1">
    <location>
        <position position="313"/>
    </location>
    <ligand>
        <name>ATP</name>
        <dbReference type="ChEBI" id="CHEBI:30616"/>
    </ligand>
</feature>
<feature type="binding site" evidence="1">
    <location>
        <position position="410"/>
    </location>
    <ligand>
        <name>ADP</name>
        <dbReference type="ChEBI" id="CHEBI:456216"/>
    </ligand>
</feature>
<feature type="binding site" evidence="1">
    <location>
        <position position="410"/>
    </location>
    <ligand>
        <name>ATP</name>
        <dbReference type="ChEBI" id="CHEBI:30616"/>
    </ligand>
</feature>
<feature type="binding site" evidence="1">
    <location>
        <position position="414"/>
    </location>
    <ligand>
        <name>ADP</name>
        <dbReference type="ChEBI" id="CHEBI:456216"/>
    </ligand>
</feature>
<evidence type="ECO:0000255" key="1">
    <source>
        <dbReference type="HAMAP-Rule" id="MF_00186"/>
    </source>
</evidence>
<gene>
    <name evidence="1" type="primary">glpK</name>
    <name type="ordered locus">Bcenmc03_2707</name>
</gene>
<sequence>MQDQYILALDQGTTSSRAMLFDRQGNIVSIAQKEFEQIYPQPGWVEHDPQEIWSTQAGVAAEAVTRTGLNGTSIAAIGITNQRETTIVWDRETGQPVYNAIVWQDRRTADFCDSLKKQGLEAKVRAKTGLPIDSYFSATKIRWILDNVPGARDKARQGKLAFGTVDSWLVWNFTKHELHVTDVTNASRTMLFNIHTREWDSELLELLDIPRSMLPEVKASSEIYGHTKTTVFASKIPLAGIAGDQHAALFGQMCTTSGMVKNTYGTGCFLMMNTGDKPIESKNNLVTTIAWQIGDDVQYALEGSIFIAGAVVQWLRDGVGLIKTAAEIEALAASVPHTDGVYLVPAFAGLGAPHWNARARGSVFGVTRGTSAAHLARAALDAIAYQSLDVLAAMEADSGISIGELRVDGGASANDLLMQFQADLLGVDAVRPQITETTALGAAYLAGLAIGYWKNLDEVRDQWQLDRRFAPSMPKEQVEQRMAGWQRAVRAAKAWADDTQ</sequence>